<accession>P0A6P4</accession>
<accession>P02997</accession>
<proteinExistence type="inferred from homology"/>
<keyword id="KW-0963">Cytoplasm</keyword>
<keyword id="KW-0251">Elongation factor</keyword>
<keyword id="KW-0648">Protein biosynthesis</keyword>
<keyword id="KW-1185">Reference proteome</keyword>
<organism>
    <name type="scientific">Shigella flexneri</name>
    <dbReference type="NCBI Taxonomy" id="623"/>
    <lineage>
        <taxon>Bacteria</taxon>
        <taxon>Pseudomonadati</taxon>
        <taxon>Pseudomonadota</taxon>
        <taxon>Gammaproteobacteria</taxon>
        <taxon>Enterobacterales</taxon>
        <taxon>Enterobacteriaceae</taxon>
        <taxon>Shigella</taxon>
    </lineage>
</organism>
<dbReference type="EMBL" id="AE005674">
    <property type="protein sequence ID" value="AAN41822.1"/>
    <property type="molecule type" value="Genomic_DNA"/>
</dbReference>
<dbReference type="EMBL" id="AE014073">
    <property type="protein sequence ID" value="AAP15703.1"/>
    <property type="molecule type" value="Genomic_DNA"/>
</dbReference>
<dbReference type="RefSeq" id="NP_706115.1">
    <property type="nucleotide sequence ID" value="NC_004337.2"/>
</dbReference>
<dbReference type="RefSeq" id="WP_000818114.1">
    <property type="nucleotide sequence ID" value="NZ_WPGW01000006.1"/>
</dbReference>
<dbReference type="SMR" id="P0A6P4"/>
<dbReference type="STRING" id="198214.SF0160"/>
<dbReference type="PaxDb" id="198214-SF0160"/>
<dbReference type="GeneID" id="1024436"/>
<dbReference type="GeneID" id="93777255"/>
<dbReference type="KEGG" id="sfl:SF0160"/>
<dbReference type="KEGG" id="sfx:S0163"/>
<dbReference type="PATRIC" id="fig|198214.7.peg.181"/>
<dbReference type="HOGENOM" id="CLU_047155_0_2_6"/>
<dbReference type="Proteomes" id="UP000001006">
    <property type="component" value="Chromosome"/>
</dbReference>
<dbReference type="Proteomes" id="UP000002673">
    <property type="component" value="Chromosome"/>
</dbReference>
<dbReference type="GO" id="GO:0005737">
    <property type="term" value="C:cytoplasm"/>
    <property type="evidence" value="ECO:0007669"/>
    <property type="project" value="UniProtKB-SubCell"/>
</dbReference>
<dbReference type="GO" id="GO:0003746">
    <property type="term" value="F:translation elongation factor activity"/>
    <property type="evidence" value="ECO:0007669"/>
    <property type="project" value="UniProtKB-UniRule"/>
</dbReference>
<dbReference type="CDD" id="cd14275">
    <property type="entry name" value="UBA_EF-Ts"/>
    <property type="match status" value="1"/>
</dbReference>
<dbReference type="FunFam" id="1.10.286.20:FF:000001">
    <property type="entry name" value="Elongation factor Ts"/>
    <property type="match status" value="1"/>
</dbReference>
<dbReference type="FunFam" id="1.10.8.10:FF:000001">
    <property type="entry name" value="Elongation factor Ts"/>
    <property type="match status" value="1"/>
</dbReference>
<dbReference type="FunFam" id="3.30.479.20:FF:000001">
    <property type="entry name" value="Elongation factor Ts"/>
    <property type="match status" value="1"/>
</dbReference>
<dbReference type="Gene3D" id="1.10.286.20">
    <property type="match status" value="1"/>
</dbReference>
<dbReference type="Gene3D" id="1.10.8.10">
    <property type="entry name" value="DNA helicase RuvA subunit, C-terminal domain"/>
    <property type="match status" value="1"/>
</dbReference>
<dbReference type="Gene3D" id="3.30.479.20">
    <property type="entry name" value="Elongation factor Ts, dimerisation domain"/>
    <property type="match status" value="2"/>
</dbReference>
<dbReference type="HAMAP" id="MF_00050">
    <property type="entry name" value="EF_Ts"/>
    <property type="match status" value="1"/>
</dbReference>
<dbReference type="InterPro" id="IPR036402">
    <property type="entry name" value="EF-Ts_dimer_sf"/>
</dbReference>
<dbReference type="InterPro" id="IPR001816">
    <property type="entry name" value="Transl_elong_EFTs/EF1B"/>
</dbReference>
<dbReference type="InterPro" id="IPR014039">
    <property type="entry name" value="Transl_elong_EFTs/EF1B_dimer"/>
</dbReference>
<dbReference type="InterPro" id="IPR018101">
    <property type="entry name" value="Transl_elong_Ts_CS"/>
</dbReference>
<dbReference type="InterPro" id="IPR009060">
    <property type="entry name" value="UBA-like_sf"/>
</dbReference>
<dbReference type="NCBIfam" id="TIGR00116">
    <property type="entry name" value="tsf"/>
    <property type="match status" value="1"/>
</dbReference>
<dbReference type="PANTHER" id="PTHR11741">
    <property type="entry name" value="ELONGATION FACTOR TS"/>
    <property type="match status" value="1"/>
</dbReference>
<dbReference type="PANTHER" id="PTHR11741:SF0">
    <property type="entry name" value="ELONGATION FACTOR TS, MITOCHONDRIAL"/>
    <property type="match status" value="1"/>
</dbReference>
<dbReference type="Pfam" id="PF00889">
    <property type="entry name" value="EF_TS"/>
    <property type="match status" value="1"/>
</dbReference>
<dbReference type="SUPFAM" id="SSF54713">
    <property type="entry name" value="Elongation factor Ts (EF-Ts), dimerisation domain"/>
    <property type="match status" value="2"/>
</dbReference>
<dbReference type="SUPFAM" id="SSF46934">
    <property type="entry name" value="UBA-like"/>
    <property type="match status" value="1"/>
</dbReference>
<dbReference type="PROSITE" id="PS01126">
    <property type="entry name" value="EF_TS_1"/>
    <property type="match status" value="1"/>
</dbReference>
<dbReference type="PROSITE" id="PS01127">
    <property type="entry name" value="EF_TS_2"/>
    <property type="match status" value="1"/>
</dbReference>
<evidence type="ECO:0000250" key="1"/>
<evidence type="ECO:0000305" key="2"/>
<name>EFTS_SHIFL</name>
<feature type="initiator methionine" description="Removed" evidence="1">
    <location>
        <position position="1"/>
    </location>
</feature>
<feature type="chain" id="PRO_0000161191" description="Elongation factor Ts">
    <location>
        <begin position="2"/>
        <end position="283"/>
    </location>
</feature>
<feature type="region of interest" description="Involved in Mg(2+) ion dislocation from EF-Tu">
    <location>
        <begin position="80"/>
        <end position="83"/>
    </location>
</feature>
<sequence length="283" mass="30423">MAEITASLVKELRERTGAGMMDCKKALTEANGDIELAIENMRKSGAIKAAKKAGNVAADGVIKTKIDGNYGIILEVNCQTDFVAKDAGFQAFADKVLDAAVAGKITDVEVLKAQFEEERVALVAKIGENINIRRVAALEGDVLGSYQHGARIGVLVAAKGADEELVKHIAMHVAASKPEFIKPEDVSAEVVEKEYQVQLDIAMQSGKPKEIAEKMVEGRMKKFTGEVSLTGQPFVMEPSKTVGQLLKEHNAEVTGFIRFEVGEGIEKVETDFAAEVAAMSKQS</sequence>
<reference key="1">
    <citation type="journal article" date="2002" name="Nucleic Acids Res.">
        <title>Genome sequence of Shigella flexneri 2a: insights into pathogenicity through comparison with genomes of Escherichia coli K12 and O157.</title>
        <authorList>
            <person name="Jin Q."/>
            <person name="Yuan Z."/>
            <person name="Xu J."/>
            <person name="Wang Y."/>
            <person name="Shen Y."/>
            <person name="Lu W."/>
            <person name="Wang J."/>
            <person name="Liu H."/>
            <person name="Yang J."/>
            <person name="Yang F."/>
            <person name="Zhang X."/>
            <person name="Zhang J."/>
            <person name="Yang G."/>
            <person name="Wu H."/>
            <person name="Qu D."/>
            <person name="Dong J."/>
            <person name="Sun L."/>
            <person name="Xue Y."/>
            <person name="Zhao A."/>
            <person name="Gao Y."/>
            <person name="Zhu J."/>
            <person name="Kan B."/>
            <person name="Ding K."/>
            <person name="Chen S."/>
            <person name="Cheng H."/>
            <person name="Yao Z."/>
            <person name="He B."/>
            <person name="Chen R."/>
            <person name="Ma D."/>
            <person name="Qiang B."/>
            <person name="Wen Y."/>
            <person name="Hou Y."/>
            <person name="Yu J."/>
        </authorList>
    </citation>
    <scope>NUCLEOTIDE SEQUENCE [LARGE SCALE GENOMIC DNA]</scope>
    <source>
        <strain>301 / Serotype 2a</strain>
    </source>
</reference>
<reference key="2">
    <citation type="journal article" date="2003" name="Infect. Immun.">
        <title>Complete genome sequence and comparative genomics of Shigella flexneri serotype 2a strain 2457T.</title>
        <authorList>
            <person name="Wei J."/>
            <person name="Goldberg M.B."/>
            <person name="Burland V."/>
            <person name="Venkatesan M.M."/>
            <person name="Deng W."/>
            <person name="Fournier G."/>
            <person name="Mayhew G.F."/>
            <person name="Plunkett G. III"/>
            <person name="Rose D.J."/>
            <person name="Darling A."/>
            <person name="Mau B."/>
            <person name="Perna N.T."/>
            <person name="Payne S.M."/>
            <person name="Runyen-Janecky L.J."/>
            <person name="Zhou S."/>
            <person name="Schwartz D.C."/>
            <person name="Blattner F.R."/>
        </authorList>
    </citation>
    <scope>NUCLEOTIDE SEQUENCE [LARGE SCALE GENOMIC DNA]</scope>
    <source>
        <strain>ATCC 700930 / 2457T / Serotype 2a</strain>
    </source>
</reference>
<gene>
    <name type="primary">tsf</name>
    <name type="ordered locus">SF0160</name>
    <name type="ordered locus">S0163</name>
</gene>
<comment type="function">
    <text evidence="1">Associates with the EF-Tu.GDP complex and induces the exchange of GDP to GTP. It remains bound to the aminoacyl-tRNA.EF-Tu.GTP complex up to the GTP hydrolysis stage on the ribosome (By similarity).</text>
</comment>
<comment type="subunit">
    <text evidence="1">Heterotetramer composed of two EF-Ts.EF-Tu dimer complexes.</text>
</comment>
<comment type="subcellular location">
    <subcellularLocation>
        <location evidence="1">Cytoplasm</location>
    </subcellularLocation>
</comment>
<comment type="similarity">
    <text evidence="2">Belongs to the EF-Ts family.</text>
</comment>
<protein>
    <recommendedName>
        <fullName>Elongation factor Ts</fullName>
        <shortName>EF-Ts</shortName>
    </recommendedName>
</protein>